<accession>P59970</accession>
<accession>A0A1R3XXP9</accession>
<accession>X2BGE9</accession>
<proteinExistence type="inferred from homology"/>
<comment type="similarity">
    <text evidence="1">Belongs to the adenylyl cyclase class-4/guanylyl cyclase family.</text>
</comment>
<gene>
    <name type="ordered locus">BQ2027_MB0915C</name>
</gene>
<protein>
    <recommendedName>
        <fullName>Uncharacterized protein Mb0915c</fullName>
    </recommendedName>
</protein>
<sequence>MLFNAVHNSLPPNIDIDHAILRGEDHPPTCAKCVARGRISALGSLDLRYHSLRCYAAPPDVGRCEFVPPRRRVLIANQGLDVSRLPPTGTVTLLLADVEESTHLWQMCPEDMATAIAHLDHTVSEAITNHGGVQPVKRYEGDSFVAAFTRASDAAACALDLQRTSLAPIRLRIGLHTGEVQLRDELYVGPTINRTARLRDLAHGGQVVLSAATGDLVTGRLPADAWLVDLGRHPLRGLPRPEWVMQLCHPDIREKFPPLRTAKSSPTSILPAQFTTFVGRRAQIS</sequence>
<dbReference type="EMBL" id="LT708304">
    <property type="protein sequence ID" value="SIT99513.1"/>
    <property type="molecule type" value="Genomic_DNA"/>
</dbReference>
<dbReference type="RefSeq" id="NP_854572.1">
    <property type="nucleotide sequence ID" value="NC_002945.3"/>
</dbReference>
<dbReference type="SMR" id="P59970"/>
<dbReference type="KEGG" id="mbo:BQ2027_MB0915C"/>
<dbReference type="PATRIC" id="fig|233413.5.peg.996"/>
<dbReference type="Proteomes" id="UP000001419">
    <property type="component" value="Chromosome"/>
</dbReference>
<dbReference type="GO" id="GO:0004016">
    <property type="term" value="F:adenylate cyclase activity"/>
    <property type="evidence" value="ECO:0007669"/>
    <property type="project" value="UniProtKB-ARBA"/>
</dbReference>
<dbReference type="GO" id="GO:0009190">
    <property type="term" value="P:cyclic nucleotide biosynthetic process"/>
    <property type="evidence" value="ECO:0007669"/>
    <property type="project" value="InterPro"/>
</dbReference>
<dbReference type="GO" id="GO:0035556">
    <property type="term" value="P:intracellular signal transduction"/>
    <property type="evidence" value="ECO:0007669"/>
    <property type="project" value="InterPro"/>
</dbReference>
<dbReference type="CDD" id="cd07302">
    <property type="entry name" value="CHD"/>
    <property type="match status" value="1"/>
</dbReference>
<dbReference type="FunFam" id="3.30.70.1230:FF:000043">
    <property type="entry name" value="Luxr family transcriptional regulator"/>
    <property type="match status" value="1"/>
</dbReference>
<dbReference type="FunFam" id="3.30.70.1230:FF:000046">
    <property type="entry name" value="Luxr family transcriptional regulator"/>
    <property type="match status" value="1"/>
</dbReference>
<dbReference type="Gene3D" id="3.30.70.1230">
    <property type="entry name" value="Nucleotide cyclase"/>
    <property type="match status" value="2"/>
</dbReference>
<dbReference type="InterPro" id="IPR001054">
    <property type="entry name" value="A/G_cyclase"/>
</dbReference>
<dbReference type="InterPro" id="IPR050697">
    <property type="entry name" value="Adenylyl/Guanylyl_Cyclase_3/4"/>
</dbReference>
<dbReference type="InterPro" id="IPR029787">
    <property type="entry name" value="Nucleotide_cyclase"/>
</dbReference>
<dbReference type="PANTHER" id="PTHR43081:SF1">
    <property type="entry name" value="ADENYLATE CYCLASE, TERMINAL-DIFFERENTIATION SPECIFIC"/>
    <property type="match status" value="1"/>
</dbReference>
<dbReference type="PANTHER" id="PTHR43081">
    <property type="entry name" value="ADENYLATE CYCLASE, TERMINAL-DIFFERENTIATION SPECIFIC-RELATED"/>
    <property type="match status" value="1"/>
</dbReference>
<dbReference type="Pfam" id="PF00211">
    <property type="entry name" value="Guanylate_cyc"/>
    <property type="match status" value="1"/>
</dbReference>
<dbReference type="SMART" id="SM00044">
    <property type="entry name" value="CYCc"/>
    <property type="match status" value="1"/>
</dbReference>
<dbReference type="SUPFAM" id="SSF55073">
    <property type="entry name" value="Nucleotide cyclase"/>
    <property type="match status" value="1"/>
</dbReference>
<dbReference type="PROSITE" id="PS50125">
    <property type="entry name" value="GUANYLATE_CYCLASE_2"/>
    <property type="match status" value="1"/>
</dbReference>
<organism>
    <name type="scientific">Mycobacterium bovis (strain ATCC BAA-935 / AF2122/97)</name>
    <dbReference type="NCBI Taxonomy" id="233413"/>
    <lineage>
        <taxon>Bacteria</taxon>
        <taxon>Bacillati</taxon>
        <taxon>Actinomycetota</taxon>
        <taxon>Actinomycetes</taxon>
        <taxon>Mycobacteriales</taxon>
        <taxon>Mycobacteriaceae</taxon>
        <taxon>Mycobacterium</taxon>
        <taxon>Mycobacterium tuberculosis complex</taxon>
    </lineage>
</organism>
<keyword id="KW-1185">Reference proteome</keyword>
<feature type="chain" id="PRO_0000074129" description="Uncharacterized protein Mb0915c">
    <location>
        <begin position="1"/>
        <end position="285"/>
    </location>
</feature>
<feature type="domain" description="Guanylate cyclase" evidence="1">
    <location>
        <begin position="92"/>
        <end position="199"/>
    </location>
</feature>
<name>Y915_MYCBO</name>
<evidence type="ECO:0000255" key="1">
    <source>
        <dbReference type="PROSITE-ProRule" id="PRU00099"/>
    </source>
</evidence>
<reference key="1">
    <citation type="journal article" date="2003" name="Proc. Natl. Acad. Sci. U.S.A.">
        <title>The complete genome sequence of Mycobacterium bovis.</title>
        <authorList>
            <person name="Garnier T."/>
            <person name="Eiglmeier K."/>
            <person name="Camus J.-C."/>
            <person name="Medina N."/>
            <person name="Mansoor H."/>
            <person name="Pryor M."/>
            <person name="Duthoy S."/>
            <person name="Grondin S."/>
            <person name="Lacroix C."/>
            <person name="Monsempe C."/>
            <person name="Simon S."/>
            <person name="Harris B."/>
            <person name="Atkin R."/>
            <person name="Doggett J."/>
            <person name="Mayes R."/>
            <person name="Keating L."/>
            <person name="Wheeler P.R."/>
            <person name="Parkhill J."/>
            <person name="Barrell B.G."/>
            <person name="Cole S.T."/>
            <person name="Gordon S.V."/>
            <person name="Hewinson R.G."/>
        </authorList>
    </citation>
    <scope>NUCLEOTIDE SEQUENCE [LARGE SCALE GENOMIC DNA]</scope>
    <source>
        <strain>ATCC BAA-935 / AF2122/97</strain>
    </source>
</reference>
<reference key="2">
    <citation type="journal article" date="2017" name="Genome Announc.">
        <title>Updated reference genome sequence and annotation of Mycobacterium bovis AF2122/97.</title>
        <authorList>
            <person name="Malone K.M."/>
            <person name="Farrell D."/>
            <person name="Stuber T.P."/>
            <person name="Schubert O.T."/>
            <person name="Aebersold R."/>
            <person name="Robbe-Austerman S."/>
            <person name="Gordon S.V."/>
        </authorList>
    </citation>
    <scope>NUCLEOTIDE SEQUENCE [LARGE SCALE GENOMIC DNA]</scope>
    <scope>GENOME REANNOTATION</scope>
    <source>
        <strain>ATCC BAA-935 / AF2122/97</strain>
    </source>
</reference>